<protein>
    <recommendedName>
        <fullName evidence="1">Protein TusB</fullName>
    </recommendedName>
    <alternativeName>
        <fullName evidence="1">tRNA 2-thiouridine synthesizing protein B</fullName>
    </alternativeName>
</protein>
<feature type="chain" id="PRO_0000234516" description="Protein TusB">
    <location>
        <begin position="1"/>
        <end position="95"/>
    </location>
</feature>
<comment type="function">
    <text evidence="1">Part of a sulfur-relay system required for 2-thiolation of 5-methylaminomethyl-2-thiouridine (mnm(5)s(2)U) at tRNA wobble positions.</text>
</comment>
<comment type="subunit">
    <text evidence="1">Heterohexamer, formed by a dimer of trimers. The hexameric TusBCD complex contains 2 copies each of TusB, TusC and TusD. The TusBCD complex interacts with TusE.</text>
</comment>
<comment type="subcellular location">
    <subcellularLocation>
        <location evidence="1">Cytoplasm</location>
    </subcellularLocation>
</comment>
<comment type="similarity">
    <text evidence="1">Belongs to the DsrH/TusB family.</text>
</comment>
<dbReference type="EMBL" id="AE017220">
    <property type="protein sequence ID" value="AAX67289.1"/>
    <property type="molecule type" value="Genomic_DNA"/>
</dbReference>
<dbReference type="RefSeq" id="WP_000903400.1">
    <property type="nucleotide sequence ID" value="NC_006905.1"/>
</dbReference>
<dbReference type="SMR" id="Q57J23"/>
<dbReference type="KEGG" id="sec:SCH_3383"/>
<dbReference type="HOGENOM" id="CLU_166087_2_1_6"/>
<dbReference type="Proteomes" id="UP000000538">
    <property type="component" value="Chromosome"/>
</dbReference>
<dbReference type="GO" id="GO:1990228">
    <property type="term" value="C:sulfurtransferase complex"/>
    <property type="evidence" value="ECO:0007669"/>
    <property type="project" value="TreeGrafter"/>
</dbReference>
<dbReference type="GO" id="GO:0002143">
    <property type="term" value="P:tRNA wobble position uridine thiolation"/>
    <property type="evidence" value="ECO:0007669"/>
    <property type="project" value="InterPro"/>
</dbReference>
<dbReference type="FunFam" id="3.40.1260.10:FF:000002">
    <property type="entry name" value="Sulfurtransferase TusB"/>
    <property type="match status" value="1"/>
</dbReference>
<dbReference type="Gene3D" id="3.40.1260.10">
    <property type="entry name" value="DsrEFH-like"/>
    <property type="match status" value="1"/>
</dbReference>
<dbReference type="HAMAP" id="MF_01564">
    <property type="entry name" value="Thiourid_synth_B"/>
    <property type="match status" value="1"/>
</dbReference>
<dbReference type="InterPro" id="IPR027396">
    <property type="entry name" value="DsrEFH-like"/>
</dbReference>
<dbReference type="InterPro" id="IPR023526">
    <property type="entry name" value="Sulphur_relay_TusB"/>
</dbReference>
<dbReference type="InterPro" id="IPR007215">
    <property type="entry name" value="Sulphur_relay_TusB/DsrH"/>
</dbReference>
<dbReference type="NCBIfam" id="NF010035">
    <property type="entry name" value="PRK13510.1"/>
    <property type="match status" value="1"/>
</dbReference>
<dbReference type="NCBIfam" id="TIGR03011">
    <property type="entry name" value="sulf_tusB_dsrH"/>
    <property type="match status" value="1"/>
</dbReference>
<dbReference type="PANTHER" id="PTHR37526">
    <property type="entry name" value="PROTEIN TUSB"/>
    <property type="match status" value="1"/>
</dbReference>
<dbReference type="PANTHER" id="PTHR37526:SF1">
    <property type="entry name" value="PROTEIN TUSB"/>
    <property type="match status" value="1"/>
</dbReference>
<dbReference type="Pfam" id="PF04077">
    <property type="entry name" value="DsrH"/>
    <property type="match status" value="1"/>
</dbReference>
<dbReference type="SUPFAM" id="SSF75169">
    <property type="entry name" value="DsrEFH-like"/>
    <property type="match status" value="1"/>
</dbReference>
<keyword id="KW-0963">Cytoplasm</keyword>
<keyword id="KW-0819">tRNA processing</keyword>
<gene>
    <name evidence="1" type="primary">tusB</name>
    <name type="ordered locus">SCH_3383</name>
</gene>
<reference key="1">
    <citation type="journal article" date="2005" name="Nucleic Acids Res.">
        <title>The genome sequence of Salmonella enterica serovar Choleraesuis, a highly invasive and resistant zoonotic pathogen.</title>
        <authorList>
            <person name="Chiu C.-H."/>
            <person name="Tang P."/>
            <person name="Chu C."/>
            <person name="Hu S."/>
            <person name="Bao Q."/>
            <person name="Yu J."/>
            <person name="Chou Y.-Y."/>
            <person name="Wang H.-S."/>
            <person name="Lee Y.-S."/>
        </authorList>
    </citation>
    <scope>NUCLEOTIDE SEQUENCE [LARGE SCALE GENOMIC DNA]</scope>
    <source>
        <strain>SC-B67</strain>
    </source>
</reference>
<organism>
    <name type="scientific">Salmonella choleraesuis (strain SC-B67)</name>
    <dbReference type="NCBI Taxonomy" id="321314"/>
    <lineage>
        <taxon>Bacteria</taxon>
        <taxon>Pseudomonadati</taxon>
        <taxon>Pseudomonadota</taxon>
        <taxon>Gammaproteobacteria</taxon>
        <taxon>Enterobacterales</taxon>
        <taxon>Enterobacteriaceae</taxon>
        <taxon>Salmonella</taxon>
    </lineage>
</organism>
<accession>Q57J23</accession>
<proteinExistence type="inferred from homology"/>
<name>TUSB_SALCH</name>
<evidence type="ECO:0000255" key="1">
    <source>
        <dbReference type="HAMAP-Rule" id="MF_01564"/>
    </source>
</evidence>
<sequence length="95" mass="10532">MLHTLPHCASSVDFPALLRLLKEGDALLLLQDGVTVAIEGNRFLESLRDAPITVYALKEDIDARGLGGQISDSVVRVDYTEFVRLTVKYANQMAW</sequence>